<reference key="1">
    <citation type="journal article" date="1982" name="J. Mol. Biol.">
        <title>Localization and regulation of the structural gene for transcription-termination factor rho of Escherichia coli.</title>
        <authorList>
            <person name="Brown S."/>
            <person name="Albrechtsen B."/>
            <person name="Pedersen S."/>
            <person name="Klemm P."/>
        </authorList>
    </citation>
    <scope>NUCLEOTIDE SEQUENCE [GENOMIC DNA]</scope>
    <scope>POSSIBLE FUNCTION</scope>
    <source>
        <strain>K12</strain>
    </source>
</reference>
<reference key="2">
    <citation type="journal article" date="1983" name="Nucleic Acids Res.">
        <title>The nucleotide sequence of the rho gene of E. coli K-12.</title>
        <authorList>
            <person name="Pinkham J.L."/>
            <person name="Platt T."/>
        </authorList>
    </citation>
    <scope>NUCLEOTIDE SEQUENCE [GENOMIC DNA]</scope>
    <source>
        <strain>K12</strain>
    </source>
</reference>
<reference key="3">
    <citation type="journal article" date="1984" name="Gene">
        <title>Genetic and physical analysis of the thioredoxin (trxA) gene of Escherichia coli K-12.</title>
        <authorList>
            <person name="Wallace B.J."/>
            <person name="Kushner S.R."/>
        </authorList>
    </citation>
    <scope>NUCLEOTIDE SEQUENCE [GENOMIC DNA]</scope>
</reference>
<reference key="4">
    <citation type="journal article" date="1992" name="Science">
        <title>Analysis of the Escherichia coli genome: DNA sequence of the region from 84.5 to 86.5 minutes.</title>
        <authorList>
            <person name="Daniels D.L."/>
            <person name="Plunkett G. III"/>
            <person name="Burland V.D."/>
            <person name="Blattner F.R."/>
        </authorList>
    </citation>
    <scope>NUCLEOTIDE SEQUENCE [LARGE SCALE GENOMIC DNA]</scope>
    <source>
        <strain>K12 / MG1655 / ATCC 47076</strain>
    </source>
</reference>
<reference key="5">
    <citation type="journal article" date="1997" name="Science">
        <title>The complete genome sequence of Escherichia coli K-12.</title>
        <authorList>
            <person name="Blattner F.R."/>
            <person name="Plunkett G. III"/>
            <person name="Bloch C.A."/>
            <person name="Perna N.T."/>
            <person name="Burland V."/>
            <person name="Riley M."/>
            <person name="Collado-Vides J."/>
            <person name="Glasner J.D."/>
            <person name="Rode C.K."/>
            <person name="Mayhew G.F."/>
            <person name="Gregor J."/>
            <person name="Davis N.W."/>
            <person name="Kirkpatrick H.A."/>
            <person name="Goeden M.A."/>
            <person name="Rose D.J."/>
            <person name="Mau B."/>
            <person name="Shao Y."/>
        </authorList>
    </citation>
    <scope>NUCLEOTIDE SEQUENCE [LARGE SCALE GENOMIC DNA]</scope>
    <source>
        <strain>K12 / MG1655 / ATCC 47076</strain>
    </source>
</reference>
<reference key="6">
    <citation type="journal article" date="2006" name="Mol. Syst. Biol.">
        <title>Highly accurate genome sequences of Escherichia coli K-12 strains MG1655 and W3110.</title>
        <authorList>
            <person name="Hayashi K."/>
            <person name="Morooka N."/>
            <person name="Yamamoto Y."/>
            <person name="Fujita K."/>
            <person name="Isono K."/>
            <person name="Choi S."/>
            <person name="Ohtsubo E."/>
            <person name="Baba T."/>
            <person name="Wanner B.L."/>
            <person name="Mori H."/>
            <person name="Horiuchi T."/>
        </authorList>
    </citation>
    <scope>NUCLEOTIDE SEQUENCE [LARGE SCALE GENOMIC DNA]</scope>
    <source>
        <strain>K12 / W3110 / ATCC 27325 / DSM 5911</strain>
    </source>
</reference>
<reference key="7">
    <citation type="journal article" date="1986" name="J. Bacteriol.">
        <title>Autogenous regulation of the gene for transcription termination factor rho in Escherichia coli: localization and function of its attenuators.</title>
        <authorList>
            <person name="Matsumoto Y."/>
            <person name="Shigesada K."/>
            <person name="Hirano M."/>
            <person name="Imai M."/>
        </authorList>
    </citation>
    <scope>POSSIBLE FUNCTION</scope>
</reference>
<name>LPRH_ECOLI</name>
<comment type="function">
    <text evidence="2 3">The rhoL-rho operon is regulated via attenuation by Rho-dependent terminators within the sequence coding for the RhoL leader peptide. It has not been determined if translation of rhoL is required for this Rho-dependent termination to function.</text>
</comment>
<organism>
    <name type="scientific">Escherichia coli (strain K12)</name>
    <dbReference type="NCBI Taxonomy" id="83333"/>
    <lineage>
        <taxon>Bacteria</taxon>
        <taxon>Pseudomonadati</taxon>
        <taxon>Pseudomonadota</taxon>
        <taxon>Gammaproteobacteria</taxon>
        <taxon>Enterobacterales</taxon>
        <taxon>Enterobacteriaceae</taxon>
        <taxon>Escherichia</taxon>
    </lineage>
</organism>
<proteinExistence type="predicted"/>
<dbReference type="EMBL" id="J01673">
    <property type="protein sequence ID" value="AAA24531.1"/>
    <property type="molecule type" value="Genomic_DNA"/>
</dbReference>
<dbReference type="EMBL" id="K02845">
    <property type="protein sequence ID" value="AAA24535.1"/>
    <property type="molecule type" value="Genomic_DNA"/>
</dbReference>
<dbReference type="EMBL" id="M87049">
    <property type="status" value="NOT_ANNOTATED_CDS"/>
    <property type="molecule type" value="Genomic_DNA"/>
</dbReference>
<dbReference type="EMBL" id="U00096">
    <property type="protein sequence ID" value="AYC08255.1"/>
    <property type="molecule type" value="Genomic_DNA"/>
</dbReference>
<dbReference type="EMBL" id="AP009048">
    <property type="protein sequence ID" value="BAE77516.1"/>
    <property type="molecule type" value="Genomic_DNA"/>
</dbReference>
<dbReference type="PIR" id="A05111">
    <property type="entry name" value="A05111"/>
</dbReference>
<dbReference type="RefSeq" id="WP_001295255.1">
    <property type="nucleotide sequence ID" value="NZ_STEB01000021.1"/>
</dbReference>
<dbReference type="FunCoup" id="P0ADF3">
    <property type="interactions" value="15"/>
</dbReference>
<dbReference type="IntAct" id="P0ADF3">
    <property type="interactions" value="1"/>
</dbReference>
<dbReference type="EnsemblBacteria" id="AYC08255">
    <property type="protein sequence ID" value="AYC08255"/>
    <property type="gene ID" value="b3782"/>
</dbReference>
<dbReference type="GeneID" id="93778162"/>
<dbReference type="KEGG" id="ecj:JW3755"/>
<dbReference type="KEGG" id="ecoc:C3026_20475"/>
<dbReference type="EchoBASE" id="EB4306"/>
<dbReference type="HOGENOM" id="CLU_3381617_0_0_6"/>
<dbReference type="InParanoid" id="P0ADF3"/>
<dbReference type="OrthoDB" id="6571698at2"/>
<dbReference type="BioCyc" id="EcoCyc:EG12428-MONOMER"/>
<dbReference type="PRO" id="PR:P0ADF3"/>
<dbReference type="Proteomes" id="UP000000625">
    <property type="component" value="Chromosome"/>
</dbReference>
<dbReference type="GO" id="GO:0031555">
    <property type="term" value="P:transcriptional attenuation"/>
    <property type="evidence" value="ECO:0000315"/>
    <property type="project" value="EcoCyc"/>
</dbReference>
<dbReference type="NCBIfam" id="NF007433">
    <property type="entry name" value="PRK09979.1"/>
    <property type="match status" value="1"/>
</dbReference>
<evidence type="ECO:0000256" key="1">
    <source>
        <dbReference type="SAM" id="MobiDB-lite"/>
    </source>
</evidence>
<evidence type="ECO:0000305" key="2">
    <source>
    </source>
</evidence>
<evidence type="ECO:0000305" key="3">
    <source>
    </source>
</evidence>
<sequence>MRSEQISGSSLNPSCRFSSAYSPVTRQRKDMSR</sequence>
<keyword id="KW-0428">Leader peptide</keyword>
<keyword id="KW-1185">Reference proteome</keyword>
<feature type="peptide" id="PRO_0000045078" description="rho operon leader peptide">
    <location>
        <begin position="1"/>
        <end position="33"/>
    </location>
</feature>
<feature type="region of interest" description="Disordered" evidence="1">
    <location>
        <begin position="1"/>
        <end position="33"/>
    </location>
</feature>
<feature type="compositionally biased region" description="Polar residues" evidence="1">
    <location>
        <begin position="1"/>
        <end position="25"/>
    </location>
</feature>
<protein>
    <recommendedName>
        <fullName>rho operon leader peptide</fullName>
        <shortName>RhoL</shortName>
    </recommendedName>
</protein>
<accession>P0ADF3</accession>
<accession>A0A385XJP7</accession>
<accession>P37324</accession>
<accession>Q2M890</accession>
<gene>
    <name type="primary">rhoL</name>
    <name type="ordered locus">b3782</name>
    <name type="ordered locus">JW3755</name>
</gene>